<reference key="1">
    <citation type="journal article" date="2004" name="Science">
        <title>A predator unmasked: life cycle of Bdellovibrio bacteriovorus from a genomic perspective.</title>
        <authorList>
            <person name="Rendulic S."/>
            <person name="Jagtap P."/>
            <person name="Rosinus A."/>
            <person name="Eppinger M."/>
            <person name="Baar C."/>
            <person name="Lanz C."/>
            <person name="Keller H."/>
            <person name="Lambert C."/>
            <person name="Evans K.J."/>
            <person name="Goesmann A."/>
            <person name="Meyer F."/>
            <person name="Sockett R.E."/>
            <person name="Schuster S.C."/>
        </authorList>
    </citation>
    <scope>NUCLEOTIDE SEQUENCE [LARGE SCALE GENOMIC DNA]</scope>
    <source>
        <strain>ATCC 15356 / DSM 50701 / NCIMB 9529 / HD100</strain>
    </source>
</reference>
<sequence length="1375" mass="151750">MRDLLNFFDKPKDPLSFDAVRVSLASPEMIREWSFGEVKKPETINYRTFKPERDGLFCAKIFGPIKDYECLCGKYKRMKYRGVVCEKCGVEVTQTKVRRERLGHIELATPVAHIWFLRSLPSRIGNLLNLSLKDVEKVLYCEAHVVIDPMETTLEEGQVLTEEALQAALNEFGPSFKYGMGGEAVRDLLKKIDPEYLSRKLRLEVKDTKSEAGIKKLTKRLRVVEAFKGSINKPEWMMLEALPVLPPDLRPLVPLDGGRFATSDLNDLYRRVINRNNRLKRLQELNAPDIIIRNEKRMLQEAVDALLDNGRRGKTFTGPNKRPLRSLSDMLKGKQGRFRQNLLGKRVDYSGRSVITVGPTLRLHQCGLPKKMALELFKPFVYNKLEEKGLATTIKQAKRLVDQETVEVWDILADVVKEHPVLLNRAPTLHRLGIQAFEPVLHEGKAIQLHPLVCTAFNADFDGDQMAVHVPLSVESQVEARVLMMSTNNILSPANGKPIINPSQDIVLGMYWLTRMRPGAKGSGKAFSSVQEAQYAFETGLVDLQAVCKVRINGTLQETTVGRAILSDIVPKEVPFNEVNVTMGKKQIAALIDKTFRLAGAKATCILADKIMEYGFKYSTAAGMSIGIDDMVIPAAKAPMIADAEKQVTEIQQQYDEGLITDGERYNKVVDIWAQTADKIAKEGMNAIEKQTFNVNGKEVVGPSFNPIYIMADSGARGSAAQIRQLGGMRGLMAKPSGEIIETPITANFREGLTVIQYFISTHGARKGLADTALKTANSGYLTRRLVDVAQDVVVSEIDCGVEDGLEITPIYEAGEIVQNIGDRILGRTALKDVVDAATNEVVVRANQEITENDVKIIEGRGIDKVDIRSALICQSKRGVCVKCYGRDLSRGATVNLGETVGIIAAQSIGEPGTQLTMRTFHLGGAASRAVEQSVHTSRYDGVVKLQNVHAVTNRNGKLTVMNRNGSALVIDEAGRERENFKLVYGAVLNFKEGDKVAKGQTVAEWDPYSNPIIAEVSAKIQYQDIEEGSTMQEQVDAVTGFATKVIMESKSSDVKPTVFLVDGAGKTLNLPGRDIPARYLIPVGAQLLVADQQEVHAGDVIAKMHREASKTKDITGGLPRVAELFEARKPKEAAIISEIDGYVTFGKDVKGKQRVIVTPEVGEQKEYLIPKGKHVAVREGEYVRAGEALMDGPTNPHDILAVLGAKALSAYLVDEIQEVYRLQGVGINDKHIEVIVRQMLRKVEIRDAGDSRFLAGEQVERYAYMEENERINKEGGQPATCSPLLLGITKVSLSTDSWISAASFQETTKVLTEAAINSRTDHLRGLKENIIMGRLIPAGTGLTSYKRWKVSVHEDDDIGFVALPGMTSSVQPQG</sequence>
<organism>
    <name type="scientific">Bdellovibrio bacteriovorus (strain ATCC 15356 / DSM 50701 / NCIMB 9529 / HD100)</name>
    <dbReference type="NCBI Taxonomy" id="264462"/>
    <lineage>
        <taxon>Bacteria</taxon>
        <taxon>Pseudomonadati</taxon>
        <taxon>Bdellovibrionota</taxon>
        <taxon>Bdellovibrionia</taxon>
        <taxon>Bdellovibrionales</taxon>
        <taxon>Pseudobdellovibrionaceae</taxon>
        <taxon>Bdellovibrio</taxon>
    </lineage>
</organism>
<proteinExistence type="inferred from homology"/>
<feature type="chain" id="PRO_0000067709" description="DNA-directed RNA polymerase subunit beta'">
    <location>
        <begin position="1"/>
        <end position="1375"/>
    </location>
</feature>
<feature type="binding site" evidence="1">
    <location>
        <position position="70"/>
    </location>
    <ligand>
        <name>Zn(2+)</name>
        <dbReference type="ChEBI" id="CHEBI:29105"/>
        <label>1</label>
    </ligand>
</feature>
<feature type="binding site" evidence="1">
    <location>
        <position position="72"/>
    </location>
    <ligand>
        <name>Zn(2+)</name>
        <dbReference type="ChEBI" id="CHEBI:29105"/>
        <label>1</label>
    </ligand>
</feature>
<feature type="binding site" evidence="1">
    <location>
        <position position="85"/>
    </location>
    <ligand>
        <name>Zn(2+)</name>
        <dbReference type="ChEBI" id="CHEBI:29105"/>
        <label>1</label>
    </ligand>
</feature>
<feature type="binding site" evidence="1">
    <location>
        <position position="88"/>
    </location>
    <ligand>
        <name>Zn(2+)</name>
        <dbReference type="ChEBI" id="CHEBI:29105"/>
        <label>1</label>
    </ligand>
</feature>
<feature type="binding site" evidence="1">
    <location>
        <position position="460"/>
    </location>
    <ligand>
        <name>Mg(2+)</name>
        <dbReference type="ChEBI" id="CHEBI:18420"/>
    </ligand>
</feature>
<feature type="binding site" evidence="1">
    <location>
        <position position="462"/>
    </location>
    <ligand>
        <name>Mg(2+)</name>
        <dbReference type="ChEBI" id="CHEBI:18420"/>
    </ligand>
</feature>
<feature type="binding site" evidence="1">
    <location>
        <position position="464"/>
    </location>
    <ligand>
        <name>Mg(2+)</name>
        <dbReference type="ChEBI" id="CHEBI:18420"/>
    </ligand>
</feature>
<feature type="binding site" evidence="1">
    <location>
        <position position="800"/>
    </location>
    <ligand>
        <name>Zn(2+)</name>
        <dbReference type="ChEBI" id="CHEBI:29105"/>
        <label>2</label>
    </ligand>
</feature>
<feature type="binding site" evidence="1">
    <location>
        <position position="874"/>
    </location>
    <ligand>
        <name>Zn(2+)</name>
        <dbReference type="ChEBI" id="CHEBI:29105"/>
        <label>2</label>
    </ligand>
</feature>
<feature type="binding site" evidence="1">
    <location>
        <position position="881"/>
    </location>
    <ligand>
        <name>Zn(2+)</name>
        <dbReference type="ChEBI" id="CHEBI:29105"/>
        <label>2</label>
    </ligand>
</feature>
<feature type="binding site" evidence="1">
    <location>
        <position position="884"/>
    </location>
    <ligand>
        <name>Zn(2+)</name>
        <dbReference type="ChEBI" id="CHEBI:29105"/>
        <label>2</label>
    </ligand>
</feature>
<keyword id="KW-0240">DNA-directed RNA polymerase</keyword>
<keyword id="KW-0460">Magnesium</keyword>
<keyword id="KW-0479">Metal-binding</keyword>
<keyword id="KW-0548">Nucleotidyltransferase</keyword>
<keyword id="KW-1185">Reference proteome</keyword>
<keyword id="KW-0804">Transcription</keyword>
<keyword id="KW-0808">Transferase</keyword>
<keyword id="KW-0862">Zinc</keyword>
<accession>Q6MJ10</accession>
<protein>
    <recommendedName>
        <fullName evidence="1">DNA-directed RNA polymerase subunit beta'</fullName>
        <shortName evidence="1">RNAP subunit beta'</shortName>
        <ecNumber evidence="1">2.7.7.6</ecNumber>
    </recommendedName>
    <alternativeName>
        <fullName evidence="1">RNA polymerase subunit beta'</fullName>
    </alternativeName>
    <alternativeName>
        <fullName evidence="1">Transcriptase subunit beta'</fullName>
    </alternativeName>
</protein>
<name>RPOC_BDEBA</name>
<evidence type="ECO:0000255" key="1">
    <source>
        <dbReference type="HAMAP-Rule" id="MF_01322"/>
    </source>
</evidence>
<comment type="function">
    <text evidence="1">DNA-dependent RNA polymerase catalyzes the transcription of DNA into RNA using the four ribonucleoside triphosphates as substrates.</text>
</comment>
<comment type="catalytic activity">
    <reaction evidence="1">
        <text>RNA(n) + a ribonucleoside 5'-triphosphate = RNA(n+1) + diphosphate</text>
        <dbReference type="Rhea" id="RHEA:21248"/>
        <dbReference type="Rhea" id="RHEA-COMP:14527"/>
        <dbReference type="Rhea" id="RHEA-COMP:17342"/>
        <dbReference type="ChEBI" id="CHEBI:33019"/>
        <dbReference type="ChEBI" id="CHEBI:61557"/>
        <dbReference type="ChEBI" id="CHEBI:140395"/>
        <dbReference type="EC" id="2.7.7.6"/>
    </reaction>
</comment>
<comment type="cofactor">
    <cofactor evidence="1">
        <name>Mg(2+)</name>
        <dbReference type="ChEBI" id="CHEBI:18420"/>
    </cofactor>
    <text evidence="1">Binds 1 Mg(2+) ion per subunit.</text>
</comment>
<comment type="cofactor">
    <cofactor evidence="1">
        <name>Zn(2+)</name>
        <dbReference type="ChEBI" id="CHEBI:29105"/>
    </cofactor>
    <text evidence="1">Binds 2 Zn(2+) ions per subunit.</text>
</comment>
<comment type="subunit">
    <text evidence="1">The RNAP catalytic core consists of 2 alpha, 1 beta, 1 beta' and 1 omega subunit. When a sigma factor is associated with the core the holoenzyme is formed, which can initiate transcription.</text>
</comment>
<comment type="similarity">
    <text evidence="1">Belongs to the RNA polymerase beta' chain family.</text>
</comment>
<gene>
    <name evidence="1" type="primary">rpoC</name>
    <name type="ordered locus">Bd2983</name>
</gene>
<dbReference type="EC" id="2.7.7.6" evidence="1"/>
<dbReference type="EMBL" id="BX842654">
    <property type="protein sequence ID" value="CAE80753.1"/>
    <property type="molecule type" value="Genomic_DNA"/>
</dbReference>
<dbReference type="RefSeq" id="WP_011165357.1">
    <property type="nucleotide sequence ID" value="NC_005363.1"/>
</dbReference>
<dbReference type="SMR" id="Q6MJ10"/>
<dbReference type="STRING" id="264462.Bd2983"/>
<dbReference type="GeneID" id="93013844"/>
<dbReference type="KEGG" id="bba:Bd2983"/>
<dbReference type="eggNOG" id="COG0086">
    <property type="taxonomic scope" value="Bacteria"/>
</dbReference>
<dbReference type="HOGENOM" id="CLU_000524_3_1_7"/>
<dbReference type="Proteomes" id="UP000008080">
    <property type="component" value="Chromosome"/>
</dbReference>
<dbReference type="GO" id="GO:0000428">
    <property type="term" value="C:DNA-directed RNA polymerase complex"/>
    <property type="evidence" value="ECO:0007669"/>
    <property type="project" value="UniProtKB-KW"/>
</dbReference>
<dbReference type="GO" id="GO:0003677">
    <property type="term" value="F:DNA binding"/>
    <property type="evidence" value="ECO:0007669"/>
    <property type="project" value="UniProtKB-UniRule"/>
</dbReference>
<dbReference type="GO" id="GO:0003899">
    <property type="term" value="F:DNA-directed RNA polymerase activity"/>
    <property type="evidence" value="ECO:0007669"/>
    <property type="project" value="UniProtKB-UniRule"/>
</dbReference>
<dbReference type="GO" id="GO:0000287">
    <property type="term" value="F:magnesium ion binding"/>
    <property type="evidence" value="ECO:0007669"/>
    <property type="project" value="UniProtKB-UniRule"/>
</dbReference>
<dbReference type="GO" id="GO:0008270">
    <property type="term" value="F:zinc ion binding"/>
    <property type="evidence" value="ECO:0007669"/>
    <property type="project" value="UniProtKB-UniRule"/>
</dbReference>
<dbReference type="GO" id="GO:0006351">
    <property type="term" value="P:DNA-templated transcription"/>
    <property type="evidence" value="ECO:0007669"/>
    <property type="project" value="UniProtKB-UniRule"/>
</dbReference>
<dbReference type="CDD" id="cd02655">
    <property type="entry name" value="RNAP_beta'_C"/>
    <property type="match status" value="1"/>
</dbReference>
<dbReference type="CDD" id="cd01609">
    <property type="entry name" value="RNAP_beta'_N"/>
    <property type="match status" value="1"/>
</dbReference>
<dbReference type="FunFam" id="1.10.132.30:FF:000003">
    <property type="entry name" value="DNA-directed RNA polymerase subunit beta"/>
    <property type="match status" value="1"/>
</dbReference>
<dbReference type="FunFam" id="1.10.150.390:FF:000002">
    <property type="entry name" value="DNA-directed RNA polymerase subunit beta"/>
    <property type="match status" value="1"/>
</dbReference>
<dbReference type="Gene3D" id="1.10.132.30">
    <property type="match status" value="1"/>
</dbReference>
<dbReference type="Gene3D" id="1.10.150.390">
    <property type="match status" value="1"/>
</dbReference>
<dbReference type="Gene3D" id="1.10.1790.20">
    <property type="match status" value="1"/>
</dbReference>
<dbReference type="Gene3D" id="1.10.40.90">
    <property type="match status" value="1"/>
</dbReference>
<dbReference type="Gene3D" id="2.40.40.20">
    <property type="match status" value="1"/>
</dbReference>
<dbReference type="Gene3D" id="2.40.50.100">
    <property type="match status" value="3"/>
</dbReference>
<dbReference type="Gene3D" id="4.10.860.120">
    <property type="entry name" value="RNA polymerase II, clamp domain"/>
    <property type="match status" value="1"/>
</dbReference>
<dbReference type="Gene3D" id="1.10.274.100">
    <property type="entry name" value="RNA polymerase Rpb1, domain 3"/>
    <property type="match status" value="1"/>
</dbReference>
<dbReference type="HAMAP" id="MF_01322">
    <property type="entry name" value="RNApol_bact_RpoC"/>
    <property type="match status" value="1"/>
</dbReference>
<dbReference type="InterPro" id="IPR045867">
    <property type="entry name" value="DNA-dir_RpoC_beta_prime"/>
</dbReference>
<dbReference type="InterPro" id="IPR012754">
    <property type="entry name" value="DNA-dir_RpoC_beta_prime_bact"/>
</dbReference>
<dbReference type="InterPro" id="IPR000722">
    <property type="entry name" value="RNA_pol_asu"/>
</dbReference>
<dbReference type="InterPro" id="IPR006592">
    <property type="entry name" value="RNA_pol_N"/>
</dbReference>
<dbReference type="InterPro" id="IPR007080">
    <property type="entry name" value="RNA_pol_Rpb1_1"/>
</dbReference>
<dbReference type="InterPro" id="IPR007066">
    <property type="entry name" value="RNA_pol_Rpb1_3"/>
</dbReference>
<dbReference type="InterPro" id="IPR042102">
    <property type="entry name" value="RNA_pol_Rpb1_3_sf"/>
</dbReference>
<dbReference type="InterPro" id="IPR007083">
    <property type="entry name" value="RNA_pol_Rpb1_4"/>
</dbReference>
<dbReference type="InterPro" id="IPR007081">
    <property type="entry name" value="RNA_pol_Rpb1_5"/>
</dbReference>
<dbReference type="InterPro" id="IPR044893">
    <property type="entry name" value="RNA_pol_Rpb1_clamp_domain"/>
</dbReference>
<dbReference type="InterPro" id="IPR038120">
    <property type="entry name" value="Rpb1_funnel_sf"/>
</dbReference>
<dbReference type="NCBIfam" id="TIGR02386">
    <property type="entry name" value="rpoC_TIGR"/>
    <property type="match status" value="1"/>
</dbReference>
<dbReference type="PANTHER" id="PTHR19376">
    <property type="entry name" value="DNA-DIRECTED RNA POLYMERASE"/>
    <property type="match status" value="1"/>
</dbReference>
<dbReference type="PANTHER" id="PTHR19376:SF54">
    <property type="entry name" value="DNA-DIRECTED RNA POLYMERASE SUBUNIT BETA"/>
    <property type="match status" value="1"/>
</dbReference>
<dbReference type="Pfam" id="PF04997">
    <property type="entry name" value="RNA_pol_Rpb1_1"/>
    <property type="match status" value="1"/>
</dbReference>
<dbReference type="Pfam" id="PF00623">
    <property type="entry name" value="RNA_pol_Rpb1_2"/>
    <property type="match status" value="2"/>
</dbReference>
<dbReference type="Pfam" id="PF04983">
    <property type="entry name" value="RNA_pol_Rpb1_3"/>
    <property type="match status" value="1"/>
</dbReference>
<dbReference type="Pfam" id="PF05000">
    <property type="entry name" value="RNA_pol_Rpb1_4"/>
    <property type="match status" value="1"/>
</dbReference>
<dbReference type="Pfam" id="PF04998">
    <property type="entry name" value="RNA_pol_Rpb1_5"/>
    <property type="match status" value="1"/>
</dbReference>
<dbReference type="SMART" id="SM00663">
    <property type="entry name" value="RPOLA_N"/>
    <property type="match status" value="1"/>
</dbReference>
<dbReference type="SUPFAM" id="SSF64484">
    <property type="entry name" value="beta and beta-prime subunits of DNA dependent RNA-polymerase"/>
    <property type="match status" value="1"/>
</dbReference>